<protein>
    <recommendedName>
        <fullName evidence="1">Large ribosomal subunit protein uL11A</fullName>
    </recommendedName>
    <alternativeName>
        <fullName evidence="2">50S ribosomal protein L11-1</fullName>
    </alternativeName>
</protein>
<accession>Q9KGE6</accession>
<organism>
    <name type="scientific">Halalkalibacterium halodurans (strain ATCC BAA-125 / DSM 18197 / FERM 7344 / JCM 9153 / C-125)</name>
    <name type="common">Bacillus halodurans</name>
    <dbReference type="NCBI Taxonomy" id="272558"/>
    <lineage>
        <taxon>Bacteria</taxon>
        <taxon>Bacillati</taxon>
        <taxon>Bacillota</taxon>
        <taxon>Bacilli</taxon>
        <taxon>Bacillales</taxon>
        <taxon>Bacillaceae</taxon>
        <taxon>Halalkalibacterium (ex Joshi et al. 2022)</taxon>
    </lineage>
</organism>
<keyword id="KW-0488">Methylation</keyword>
<keyword id="KW-1185">Reference proteome</keyword>
<keyword id="KW-0687">Ribonucleoprotein</keyword>
<keyword id="KW-0689">Ribosomal protein</keyword>
<keyword id="KW-0694">RNA-binding</keyword>
<keyword id="KW-0699">rRNA-binding</keyword>
<feature type="chain" id="PRO_0000104240" description="Large ribosomal subunit protein uL11A">
    <location>
        <begin position="1"/>
        <end position="141"/>
    </location>
</feature>
<dbReference type="EMBL" id="BA000004">
    <property type="protein sequence ID" value="BAB03838.1"/>
    <property type="molecule type" value="Genomic_DNA"/>
</dbReference>
<dbReference type="PIR" id="G83664">
    <property type="entry name" value="G83664"/>
</dbReference>
<dbReference type="RefSeq" id="WP_010896302.1">
    <property type="nucleotide sequence ID" value="NC_002570.2"/>
</dbReference>
<dbReference type="SMR" id="Q9KGE6"/>
<dbReference type="STRING" id="272558.gene:10725959"/>
<dbReference type="GeneID" id="87595662"/>
<dbReference type="KEGG" id="bha:BH0119"/>
<dbReference type="eggNOG" id="COG0080">
    <property type="taxonomic scope" value="Bacteria"/>
</dbReference>
<dbReference type="HOGENOM" id="CLU_074237_2_1_9"/>
<dbReference type="OrthoDB" id="9802408at2"/>
<dbReference type="Proteomes" id="UP000001258">
    <property type="component" value="Chromosome"/>
</dbReference>
<dbReference type="GO" id="GO:0022625">
    <property type="term" value="C:cytosolic large ribosomal subunit"/>
    <property type="evidence" value="ECO:0007669"/>
    <property type="project" value="TreeGrafter"/>
</dbReference>
<dbReference type="GO" id="GO:0070180">
    <property type="term" value="F:large ribosomal subunit rRNA binding"/>
    <property type="evidence" value="ECO:0007669"/>
    <property type="project" value="UniProtKB-UniRule"/>
</dbReference>
<dbReference type="GO" id="GO:0003735">
    <property type="term" value="F:structural constituent of ribosome"/>
    <property type="evidence" value="ECO:0007669"/>
    <property type="project" value="InterPro"/>
</dbReference>
<dbReference type="GO" id="GO:0006412">
    <property type="term" value="P:translation"/>
    <property type="evidence" value="ECO:0007669"/>
    <property type="project" value="UniProtKB-UniRule"/>
</dbReference>
<dbReference type="CDD" id="cd00349">
    <property type="entry name" value="Ribosomal_L11"/>
    <property type="match status" value="1"/>
</dbReference>
<dbReference type="FunFam" id="1.10.10.250:FF:000001">
    <property type="entry name" value="50S ribosomal protein L11"/>
    <property type="match status" value="1"/>
</dbReference>
<dbReference type="FunFam" id="3.30.1550.10:FF:000001">
    <property type="entry name" value="50S ribosomal protein L11"/>
    <property type="match status" value="1"/>
</dbReference>
<dbReference type="Gene3D" id="1.10.10.250">
    <property type="entry name" value="Ribosomal protein L11, C-terminal domain"/>
    <property type="match status" value="1"/>
</dbReference>
<dbReference type="Gene3D" id="3.30.1550.10">
    <property type="entry name" value="Ribosomal protein L11/L12, N-terminal domain"/>
    <property type="match status" value="1"/>
</dbReference>
<dbReference type="HAMAP" id="MF_00736">
    <property type="entry name" value="Ribosomal_uL11"/>
    <property type="match status" value="1"/>
</dbReference>
<dbReference type="InterPro" id="IPR000911">
    <property type="entry name" value="Ribosomal_uL11"/>
</dbReference>
<dbReference type="InterPro" id="IPR006519">
    <property type="entry name" value="Ribosomal_uL11_bac-typ"/>
</dbReference>
<dbReference type="InterPro" id="IPR020783">
    <property type="entry name" value="Ribosomal_uL11_C"/>
</dbReference>
<dbReference type="InterPro" id="IPR036769">
    <property type="entry name" value="Ribosomal_uL11_C_sf"/>
</dbReference>
<dbReference type="InterPro" id="IPR020785">
    <property type="entry name" value="Ribosomal_uL11_CS"/>
</dbReference>
<dbReference type="InterPro" id="IPR020784">
    <property type="entry name" value="Ribosomal_uL11_N"/>
</dbReference>
<dbReference type="InterPro" id="IPR036796">
    <property type="entry name" value="Ribosomal_uL11_N_sf"/>
</dbReference>
<dbReference type="NCBIfam" id="TIGR01632">
    <property type="entry name" value="L11_bact"/>
    <property type="match status" value="1"/>
</dbReference>
<dbReference type="PANTHER" id="PTHR11661">
    <property type="entry name" value="60S RIBOSOMAL PROTEIN L12"/>
    <property type="match status" value="1"/>
</dbReference>
<dbReference type="PANTHER" id="PTHR11661:SF1">
    <property type="entry name" value="LARGE RIBOSOMAL SUBUNIT PROTEIN UL11M"/>
    <property type="match status" value="1"/>
</dbReference>
<dbReference type="Pfam" id="PF00298">
    <property type="entry name" value="Ribosomal_L11"/>
    <property type="match status" value="1"/>
</dbReference>
<dbReference type="Pfam" id="PF03946">
    <property type="entry name" value="Ribosomal_L11_N"/>
    <property type="match status" value="1"/>
</dbReference>
<dbReference type="SMART" id="SM00649">
    <property type="entry name" value="RL11"/>
    <property type="match status" value="1"/>
</dbReference>
<dbReference type="SUPFAM" id="SSF54747">
    <property type="entry name" value="Ribosomal L11/L12e N-terminal domain"/>
    <property type="match status" value="1"/>
</dbReference>
<dbReference type="SUPFAM" id="SSF46906">
    <property type="entry name" value="Ribosomal protein L11, C-terminal domain"/>
    <property type="match status" value="1"/>
</dbReference>
<dbReference type="PROSITE" id="PS00359">
    <property type="entry name" value="RIBOSOMAL_L11"/>
    <property type="match status" value="1"/>
</dbReference>
<evidence type="ECO:0000255" key="1">
    <source>
        <dbReference type="HAMAP-Rule" id="MF_00736"/>
    </source>
</evidence>
<evidence type="ECO:0000305" key="2"/>
<sequence length="141" mass="14978">MAKKVIKMVKLQIPAGKANPAPPVGPALGQAGVNIMGFCKEFNARTSDQAGLIIPVEITVFEDRSFTFVTKTPPAAVLLKKAAGIESGSGEPNRNKVATVKRDKVREIAETKMPDLNAADVEAAMRMVEGTARSMGIVIED</sequence>
<proteinExistence type="inferred from homology"/>
<name>RL11A_HALH5</name>
<comment type="function">
    <text evidence="1">Forms part of the ribosomal stalk which helps the ribosome interact with GTP-bound translation factors.</text>
</comment>
<comment type="subunit">
    <text evidence="1">Part of the ribosomal stalk of the 50S ribosomal subunit. Interacts with L10 and the large rRNA to form the base of the stalk. L10 forms an elongated spine to which L12 dimers bind in a sequential fashion forming a multimeric L10(L12)X complex.</text>
</comment>
<comment type="PTM">
    <text evidence="1">One or more lysine residues are methylated.</text>
</comment>
<comment type="similarity">
    <text evidence="1">Belongs to the universal ribosomal protein uL11 family.</text>
</comment>
<reference key="1">
    <citation type="journal article" date="2000" name="Nucleic Acids Res.">
        <title>Complete genome sequence of the alkaliphilic bacterium Bacillus halodurans and genomic sequence comparison with Bacillus subtilis.</title>
        <authorList>
            <person name="Takami H."/>
            <person name="Nakasone K."/>
            <person name="Takaki Y."/>
            <person name="Maeno G."/>
            <person name="Sasaki R."/>
            <person name="Masui N."/>
            <person name="Fuji F."/>
            <person name="Hirama C."/>
            <person name="Nakamura Y."/>
            <person name="Ogasawara N."/>
            <person name="Kuhara S."/>
            <person name="Horikoshi K."/>
        </authorList>
    </citation>
    <scope>NUCLEOTIDE SEQUENCE [LARGE SCALE GENOMIC DNA]</scope>
    <source>
        <strain>ATCC BAA-125 / DSM 18197 / FERM 7344 / JCM 9153 / C-125</strain>
    </source>
</reference>
<gene>
    <name evidence="1" type="primary">rplK1</name>
    <name type="synonym">rplK</name>
    <name type="ordered locus">BH0119</name>
</gene>